<sequence length="315" mass="35957">METSSKGLLTQVTQFWNLLDDLAQSDPEGYEKFIQQQLKEGKQLCAAPEPQLCLQTRILKPKEKILFINLCQWTRIPAPQSTTHPVPLTVGKPEDTTEISDAYTVIDVAYNPDVLHAAEKDQVKKNQLIQMAMKCIEEKFQFTLSHSYHITKFRIKGSIQRMKQNLMGIQTDSIDLREKMRRELTLGQIRSSTMSNPDHFPQLLLPKDQVSGKAVCLIEEISSTEIQVEMKMPAYELKIVHDHSEKPLKIELKVELPGINSVSLCDLSVSEDDLLIEVSEKYRLHLNLPKLIDTEMTTAKFIKEKSTLIITMPLV</sequence>
<protein>
    <recommendedName>
        <fullName>PIH1 domain-containing protein 2</fullName>
    </recommendedName>
</protein>
<keyword id="KW-0025">Alternative splicing</keyword>
<keyword id="KW-1267">Proteomics identification</keyword>
<keyword id="KW-1185">Reference proteome</keyword>
<comment type="interaction">
    <interactant intactId="EBI-10232538">
        <id>Q8WWB5</id>
    </interactant>
    <interactant intactId="EBI-17183751">
        <id>X5D778</id>
        <label>ANKRD11</label>
    </interactant>
    <organismsDiffer>false</organismsDiffer>
    <experiments>3</experiments>
</comment>
<comment type="interaction">
    <interactant intactId="EBI-10232538">
        <id>Q8WWB5</id>
    </interactant>
    <interactant intactId="EBI-747185">
        <id>O95817</id>
        <label>BAG3</label>
    </interactant>
    <organismsDiffer>false</organismsDiffer>
    <experiments>3</experiments>
</comment>
<comment type="interaction">
    <interactant intactId="EBI-10232538">
        <id>Q8WWB5</id>
    </interactant>
    <interactant intactId="EBI-11524452">
        <id>Q8N9N5-2</id>
        <label>BANP</label>
    </interactant>
    <organismsDiffer>false</organismsDiffer>
    <experiments>3</experiments>
</comment>
<comment type="interaction">
    <interactant intactId="EBI-10232538">
        <id>Q8WWB5</id>
    </interactant>
    <interactant intactId="EBI-12196065">
        <id>Q8N7E2</id>
        <label>CBLL2</label>
    </interactant>
    <organismsDiffer>false</organismsDiffer>
    <experiments>3</experiments>
</comment>
<comment type="interaction">
    <interactant intactId="EBI-10232538">
        <id>Q8WWB5</id>
    </interactant>
    <interactant intactId="EBI-712912">
        <id>Q9HC52</id>
        <label>CBX8</label>
    </interactant>
    <organismsDiffer>false</organismsDiffer>
    <experiments>3</experiments>
</comment>
<comment type="interaction">
    <interactant intactId="EBI-10232538">
        <id>Q8WWB5</id>
    </interactant>
    <interactant intactId="EBI-12024864">
        <id>Q96S94-5</id>
        <label>CCNL2</label>
    </interactant>
    <organismsDiffer>false</organismsDiffer>
    <experiments>3</experiments>
</comment>
<comment type="interaction">
    <interactant intactId="EBI-10232538">
        <id>Q8WWB5</id>
    </interactant>
    <interactant intactId="EBI-396137">
        <id>Q9UJX2</id>
        <label>CDC23</label>
    </interactant>
    <organismsDiffer>false</organismsDiffer>
    <experiments>3</experiments>
</comment>
<comment type="interaction">
    <interactant intactId="EBI-10232538">
        <id>Q8WWB5</id>
    </interactant>
    <interactant intactId="EBI-979174">
        <id>Q53HL2</id>
        <label>CDCA8</label>
    </interactant>
    <organismsDiffer>false</organismsDiffer>
    <experiments>3</experiments>
</comment>
<comment type="interaction">
    <interactant intactId="EBI-10232538">
        <id>Q8WWB5</id>
    </interactant>
    <interactant intactId="EBI-3919850">
        <id>Q8IVW4</id>
        <label>CDKL3</label>
    </interactant>
    <organismsDiffer>false</organismsDiffer>
    <experiments>3</experiments>
</comment>
<comment type="interaction">
    <interactant intactId="EBI-10232538">
        <id>Q8WWB5</id>
    </interactant>
    <interactant intactId="EBI-749051">
        <id>Q8IYR0</id>
        <label>CFAP206</label>
    </interactant>
    <organismsDiffer>false</organismsDiffer>
    <experiments>3</experiments>
</comment>
<comment type="interaction">
    <interactant intactId="EBI-10232538">
        <id>Q8WWB5</id>
    </interactant>
    <interactant intactId="EBI-714979">
        <id>Q9UBI1</id>
        <label>COMMD3</label>
    </interactant>
    <organismsDiffer>false</organismsDiffer>
    <experiments>5</experiments>
</comment>
<comment type="interaction">
    <interactant intactId="EBI-10232538">
        <id>Q8WWB5</id>
    </interactant>
    <interactant intactId="EBI-6873363">
        <id>Q8WUE5</id>
        <label>CT55</label>
    </interactant>
    <organismsDiffer>false</organismsDiffer>
    <experiments>3</experiments>
</comment>
<comment type="interaction">
    <interactant intactId="EBI-10232538">
        <id>Q8WWB5</id>
    </interactant>
    <interactant intactId="EBI-1188472">
        <id>P78358</id>
        <label>CTAG1B</label>
    </interactant>
    <organismsDiffer>false</organismsDiffer>
    <experiments>3</experiments>
</comment>
<comment type="interaction">
    <interactant intactId="EBI-10232538">
        <id>Q8WWB5</id>
    </interactant>
    <interactant intactId="EBI-1055572">
        <id>P17661</id>
        <label>DES</label>
    </interactant>
    <organismsDiffer>false</organismsDiffer>
    <experiments>3</experiments>
</comment>
<comment type="interaction">
    <interactant intactId="EBI-10232538">
        <id>Q8WWB5</id>
    </interactant>
    <interactant intactId="EBI-465363">
        <id>Q96FX2</id>
        <label>DPH3</label>
    </interactant>
    <organismsDiffer>false</organismsDiffer>
    <experiments>6</experiments>
</comment>
<comment type="interaction">
    <interactant intactId="EBI-10232538">
        <id>Q8WWB5</id>
    </interactant>
    <interactant intactId="EBI-19949317">
        <id>O60469</id>
        <label>DSCAM</label>
    </interactant>
    <organismsDiffer>false</organismsDiffer>
    <experiments>3</experiments>
</comment>
<comment type="interaction">
    <interactant intactId="EBI-10232538">
        <id>Q8WWB5</id>
    </interactant>
    <interactant intactId="EBI-10232522">
        <id>Q14240-2</id>
        <label>EIF4A2</label>
    </interactant>
    <organismsDiffer>false</organismsDiffer>
    <experiments>3</experiments>
</comment>
<comment type="interaction">
    <interactant intactId="EBI-10232538">
        <id>Q8WWB5</id>
    </interactant>
    <interactant intactId="EBI-744099">
        <id>Q9H0I2</id>
        <label>ENKD1</label>
    </interactant>
    <organismsDiffer>false</organismsDiffer>
    <experiments>3</experiments>
</comment>
<comment type="interaction">
    <interactant intactId="EBI-10232538">
        <id>Q8WWB5</id>
    </interactant>
    <interactant intactId="EBI-371876">
        <id>Q9NQT4</id>
        <label>EXOSC5</label>
    </interactant>
    <organismsDiffer>false</organismsDiffer>
    <experiments>3</experiments>
</comment>
<comment type="interaction">
    <interactant intactId="EBI-10232538">
        <id>Q8WWB5</id>
    </interactant>
    <interactant intactId="EBI-725515">
        <id>O43559</id>
        <label>FRS3</label>
    </interactant>
    <organismsDiffer>false</organismsDiffer>
    <experiments>3</experiments>
</comment>
<comment type="interaction">
    <interactant intactId="EBI-10232538">
        <id>Q8WWB5</id>
    </interactant>
    <interactant intactId="EBI-744302">
        <id>P14136</id>
        <label>GFAP</label>
    </interactant>
    <organismsDiffer>false</organismsDiffer>
    <experiments>4</experiments>
</comment>
<comment type="interaction">
    <interactant intactId="EBI-10232538">
        <id>Q8WWB5</id>
    </interactant>
    <interactant intactId="EBI-2548508">
        <id>Q96IK5</id>
        <label>GMCL1</label>
    </interactant>
    <organismsDiffer>false</organismsDiffer>
    <experiments>3</experiments>
</comment>
<comment type="interaction">
    <interactant intactId="EBI-10232538">
        <id>Q8WWB5</id>
    </interactant>
    <interactant intactId="EBI-473189">
        <id>Q96D09</id>
        <label>GPRASP2</label>
    </interactant>
    <organismsDiffer>false</organismsDiffer>
    <experiments>3</experiments>
</comment>
<comment type="interaction">
    <interactant intactId="EBI-10232538">
        <id>Q8WWB5</id>
    </interactant>
    <interactant intactId="EBI-12163087">
        <id>Q9BYE0</id>
        <label>HES7</label>
    </interactant>
    <organismsDiffer>false</organismsDiffer>
    <experiments>3</experiments>
</comment>
<comment type="interaction">
    <interactant intactId="EBI-10232538">
        <id>Q8WWB5</id>
    </interactant>
    <interactant intactId="EBI-12056251">
        <id>Q9ULV5-2</id>
        <label>HSF4</label>
    </interactant>
    <organismsDiffer>false</organismsDiffer>
    <experiments>3</experiments>
</comment>
<comment type="interaction">
    <interactant intactId="EBI-10232538">
        <id>Q8WWB5</id>
    </interactant>
    <interactant intactId="EBI-517086">
        <id>O43464</id>
        <label>HTRA2</label>
    </interactant>
    <organismsDiffer>false</organismsDiffer>
    <experiments>3</experiments>
</comment>
<comment type="interaction">
    <interactant intactId="EBI-10232538">
        <id>Q8WWB5</id>
    </interactant>
    <interactant intactId="EBI-466029">
        <id>P42858</id>
        <label>HTT</label>
    </interactant>
    <organismsDiffer>false</organismsDiffer>
    <experiments>3</experiments>
</comment>
<comment type="interaction">
    <interactant intactId="EBI-10232538">
        <id>Q8WWB5</id>
    </interactant>
    <interactant intactId="EBI-10220600">
        <id>Q8NA54</id>
        <label>IQUB</label>
    </interactant>
    <organismsDiffer>false</organismsDiffer>
    <experiments>3</experiments>
</comment>
<comment type="interaction">
    <interactant intactId="EBI-10232538">
        <id>Q8WWB5</id>
    </interactant>
    <interactant intactId="EBI-712105">
        <id>Q13352</id>
        <label>ITGB3BP</label>
    </interactant>
    <organismsDiffer>false</organismsDiffer>
    <experiments>7</experiments>
</comment>
<comment type="interaction">
    <interactant intactId="EBI-10232538">
        <id>Q8WWB5</id>
    </interactant>
    <interactant intactId="EBI-10175826">
        <id>Q13352-5</id>
        <label>ITGB3BP</label>
    </interactant>
    <organismsDiffer>false</organismsDiffer>
    <experiments>3</experiments>
</comment>
<comment type="interaction">
    <interactant intactId="EBI-10232538">
        <id>Q8WWB5</id>
    </interactant>
    <interactant intactId="EBI-10176379">
        <id>P59991</id>
        <label>KRTAP12-2</label>
    </interactant>
    <organismsDiffer>false</organismsDiffer>
    <experiments>3</experiments>
</comment>
<comment type="interaction">
    <interactant intactId="EBI-10232538">
        <id>Q8WWB5</id>
    </interactant>
    <interactant intactId="EBI-10176396">
        <id>P60329</id>
        <label>KRTAP12-4</label>
    </interactant>
    <organismsDiffer>false</organismsDiffer>
    <experiments>6</experiments>
</comment>
<comment type="interaction">
    <interactant intactId="EBI-10232538">
        <id>Q8WWB5</id>
    </interactant>
    <interactant intactId="EBI-2339312">
        <id>P28838</id>
        <label>LAP3</label>
    </interactant>
    <organismsDiffer>false</organismsDiffer>
    <experiments>3</experiments>
</comment>
<comment type="interaction">
    <interactant intactId="EBI-10232538">
        <id>Q8WWB5</id>
    </interactant>
    <interactant intactId="EBI-968218">
        <id>P20700</id>
        <label>LMNB1</label>
    </interactant>
    <organismsDiffer>false</organismsDiffer>
    <experiments>3</experiments>
</comment>
<comment type="interaction">
    <interactant intactId="EBI-10232538">
        <id>Q8WWB5</id>
    </interactant>
    <interactant intactId="EBI-11987923">
        <id>P59942</id>
        <label>MCCD1</label>
    </interactant>
    <organismsDiffer>false</organismsDiffer>
    <experiments>3</experiments>
</comment>
<comment type="interaction">
    <interactant intactId="EBI-10232538">
        <id>Q8WWB5</id>
    </interactant>
    <interactant intactId="EBI-724076">
        <id>Q99750</id>
        <label>MDFI</label>
    </interactant>
    <organismsDiffer>false</organismsDiffer>
    <experiments>6</experiments>
</comment>
<comment type="interaction">
    <interactant intactId="EBI-10232538">
        <id>Q8WWB5</id>
    </interactant>
    <interactant intactId="EBI-394644">
        <id>Q9H944</id>
        <label>MED20</label>
    </interactant>
    <organismsDiffer>false</organismsDiffer>
    <experiments>3</experiments>
</comment>
<comment type="interaction">
    <interactant intactId="EBI-10232538">
        <id>Q8WWB5</id>
    </interactant>
    <interactant intactId="EBI-2555085">
        <id>Q8IVT2</id>
        <label>MISP</label>
    </interactant>
    <organismsDiffer>false</organismsDiffer>
    <experiments>3</experiments>
</comment>
<comment type="interaction">
    <interactant intactId="EBI-10232538">
        <id>Q8WWB5</id>
    </interactant>
    <interactant intactId="EBI-748896">
        <id>Q96HT8</id>
        <label>MRFAP1L1</label>
    </interactant>
    <organismsDiffer>false</organismsDiffer>
    <experiments>8</experiments>
</comment>
<comment type="interaction">
    <interactant intactId="EBI-10232538">
        <id>Q8WWB5</id>
    </interactant>
    <interactant intactId="EBI-1014472">
        <id>P35240</id>
        <label>NF2</label>
    </interactant>
    <organismsDiffer>false</organismsDiffer>
    <experiments>3</experiments>
</comment>
<comment type="interaction">
    <interactant intactId="EBI-10232538">
        <id>Q8WWB5</id>
    </interactant>
    <interactant intactId="EBI-3951858">
        <id>Q16649</id>
        <label>NFIL3</label>
    </interactant>
    <organismsDiffer>false</organismsDiffer>
    <experiments>3</experiments>
</comment>
<comment type="interaction">
    <interactant intactId="EBI-10232538">
        <id>Q8WWB5</id>
    </interactant>
    <interactant intactId="EBI-2859639">
        <id>Q5HYW2</id>
        <label>NHSL2</label>
    </interactant>
    <organismsDiffer>false</organismsDiffer>
    <experiments>3</experiments>
</comment>
<comment type="interaction">
    <interactant intactId="EBI-10232538">
        <id>Q8WWB5</id>
    </interactant>
    <interactant intactId="EBI-17490746">
        <id>A8MTQ0</id>
        <label>NOTO</label>
    </interactant>
    <organismsDiffer>false</organismsDiffer>
    <experiments>3</experiments>
</comment>
<comment type="interaction">
    <interactant intactId="EBI-10232538">
        <id>Q8WWB5</id>
    </interactant>
    <interactant intactId="EBI-741158">
        <id>Q96HA8</id>
        <label>NTAQ1</label>
    </interactant>
    <organismsDiffer>false</organismsDiffer>
    <experiments>3</experiments>
</comment>
<comment type="interaction">
    <interactant intactId="EBI-10232538">
        <id>Q8WWB5</id>
    </interactant>
    <interactant intactId="EBI-398874">
        <id>Q9UBU9</id>
        <label>NXF1</label>
    </interactant>
    <organismsDiffer>false</organismsDiffer>
    <experiments>3</experiments>
</comment>
<comment type="interaction">
    <interactant intactId="EBI-10232538">
        <id>Q8WWB5</id>
    </interactant>
    <interactant intactId="EBI-10302990">
        <id>Q9BYU1</id>
        <label>PBX4</label>
    </interactant>
    <organismsDiffer>false</organismsDiffer>
    <experiments>6</experiments>
</comment>
<comment type="interaction">
    <interactant intactId="EBI-10232538">
        <id>Q8WWB5</id>
    </interactant>
    <interactant intactId="EBI-1057560">
        <id>Q9NW61</id>
        <label>PLEKHJ1</label>
    </interactant>
    <organismsDiffer>false</organismsDiffer>
    <experiments>3</experiments>
</comment>
<comment type="interaction">
    <interactant intactId="EBI-10232538">
        <id>Q8WWB5</id>
    </interactant>
    <interactant intactId="EBI-1055079">
        <id>O15160</id>
        <label>POLR1C</label>
    </interactant>
    <organismsDiffer>false</organismsDiffer>
    <experiments>3</experiments>
</comment>
<comment type="interaction">
    <interactant intactId="EBI-10232538">
        <id>Q8WWB5</id>
    </interactant>
    <interactant intactId="EBI-11320284">
        <id>Q9NQX0</id>
        <label>PRDM6</label>
    </interactant>
    <organismsDiffer>false</organismsDiffer>
    <experiments>3</experiments>
</comment>
<comment type="interaction">
    <interactant intactId="EBI-10232538">
        <id>Q8WWB5</id>
    </interactant>
    <interactant intactId="EBI-2809009">
        <id>O60678</id>
        <label>PRMT3</label>
    </interactant>
    <organismsDiffer>false</organismsDiffer>
    <experiments>3</experiments>
</comment>
<comment type="interaction">
    <interactant intactId="EBI-10232538">
        <id>Q8WWB5</id>
    </interactant>
    <interactant intactId="EBI-752074">
        <id>P41219</id>
        <label>PRPH</label>
    </interactant>
    <organismsDiffer>false</organismsDiffer>
    <experiments>3</experiments>
</comment>
<comment type="interaction">
    <interactant intactId="EBI-10232538">
        <id>Q8WWB5</id>
    </interactant>
    <interactant intactId="EBI-307352">
        <id>Q04864</id>
        <label>REL</label>
    </interactant>
    <organismsDiffer>false</organismsDiffer>
    <experiments>4</experiments>
</comment>
<comment type="interaction">
    <interactant intactId="EBI-10232538">
        <id>Q8WWB5</id>
    </interactant>
    <interactant intactId="EBI-12821217">
        <id>Q2I0M5</id>
        <label>RSPO4</label>
    </interactant>
    <organismsDiffer>false</organismsDiffer>
    <experiments>3</experiments>
</comment>
<comment type="interaction">
    <interactant intactId="EBI-10232538">
        <id>Q8WWB5</id>
    </interactant>
    <interactant intactId="EBI-727004">
        <id>O00560</id>
        <label>SDCBP</label>
    </interactant>
    <organismsDiffer>false</organismsDiffer>
    <experiments>3</experiments>
</comment>
<comment type="interaction">
    <interactant intactId="EBI-10232538">
        <id>Q8WWB5</id>
    </interactant>
    <interactant intactId="EBI-748601">
        <id>Q9UHV2</id>
        <label>SERTAD1</label>
    </interactant>
    <organismsDiffer>false</organismsDiffer>
    <experiments>3</experiments>
</comment>
<comment type="interaction">
    <interactant intactId="EBI-10232538">
        <id>Q8WWB5</id>
    </interactant>
    <interactant intactId="EBI-355293">
        <id>P03973</id>
        <label>SLPI</label>
    </interactant>
    <organismsDiffer>false</organismsDiffer>
    <experiments>3</experiments>
</comment>
<comment type="interaction">
    <interactant intactId="EBI-10232538">
        <id>Q8WWB5</id>
    </interactant>
    <interactant intactId="EBI-5235340">
        <id>Q7Z699</id>
        <label>SPRED1</label>
    </interactant>
    <organismsDiffer>false</organismsDiffer>
    <experiments>8</experiments>
</comment>
<comment type="interaction">
    <interactant intactId="EBI-10232538">
        <id>Q8WWB5</id>
    </interactant>
    <interactant intactId="EBI-10295431">
        <id>Q99909</id>
        <label>SSX3</label>
    </interactant>
    <organismsDiffer>false</organismsDiffer>
    <experiments>3</experiments>
</comment>
<comment type="interaction">
    <interactant intactId="EBI-10232538">
        <id>Q8WWB5</id>
    </interactant>
    <interactant intactId="EBI-3921347">
        <id>P51687</id>
        <label>SUOX</label>
    </interactant>
    <organismsDiffer>false</organismsDiffer>
    <experiments>3</experiments>
</comment>
<comment type="interaction">
    <interactant intactId="EBI-10232538">
        <id>Q8WWB5</id>
    </interactant>
    <interactant intactId="EBI-12940148">
        <id>P49848-3</id>
        <label>TAF6</label>
    </interactant>
    <organismsDiffer>false</organismsDiffer>
    <experiments>3</experiments>
</comment>
<comment type="interaction">
    <interactant intactId="EBI-10232538">
        <id>Q8WWB5</id>
    </interactant>
    <interactant intactId="EBI-745958">
        <id>Q5VWN6</id>
        <label>TASOR2</label>
    </interactant>
    <organismsDiffer>false</organismsDiffer>
    <experiments>5</experiments>
</comment>
<comment type="interaction">
    <interactant intactId="EBI-10232538">
        <id>Q8WWB5</id>
    </interactant>
    <interactant intactId="EBI-24203456">
        <id>Q96M53</id>
        <label>TBATA</label>
    </interactant>
    <organismsDiffer>false</organismsDiffer>
    <experiments>3</experiments>
</comment>
<comment type="interaction">
    <interactant intactId="EBI-10232538">
        <id>Q8WWB5</id>
    </interactant>
    <interactant intactId="EBI-710310">
        <id>Q15560</id>
        <label>TCEA2</label>
    </interactant>
    <organismsDiffer>false</organismsDiffer>
    <experiments>3</experiments>
</comment>
<comment type="interaction">
    <interactant intactId="EBI-10232538">
        <id>Q8WWB5</id>
    </interactant>
    <interactant intactId="EBI-746692">
        <id>P19237</id>
        <label>TNNI1</label>
    </interactant>
    <organismsDiffer>false</organismsDiffer>
    <experiments>3</experiments>
</comment>
<comment type="interaction">
    <interactant intactId="EBI-10232538">
        <id>Q8WWB5</id>
    </interactant>
    <interactant intactId="EBI-9090990">
        <id>Q5W5X9-3</id>
        <label>TTC23</label>
    </interactant>
    <organismsDiffer>false</organismsDiffer>
    <experiments>3</experiments>
</comment>
<comment type="interaction">
    <interactant intactId="EBI-10232538">
        <id>Q8WWB5</id>
    </interactant>
    <interactant intactId="EBI-2682961">
        <id>Q9Y2K1</id>
        <label>ZBTB1</label>
    </interactant>
    <organismsDiffer>false</organismsDiffer>
    <experiments>3</experiments>
</comment>
<comment type="interaction">
    <interactant intactId="EBI-10232538">
        <id>Q8WWB5</id>
    </interactant>
    <interactant intactId="EBI-7850213">
        <id>Q9UDW3</id>
        <label>ZMAT5</label>
    </interactant>
    <organismsDiffer>false</organismsDiffer>
    <experiments>3</experiments>
</comment>
<comment type="interaction">
    <interactant intactId="EBI-10232538">
        <id>Q8WWB5</id>
    </interactant>
    <interactant intactId="EBI-6874731">
        <id>O15231</id>
        <label>ZNF185</label>
    </interactant>
    <organismsDiffer>false</organismsDiffer>
    <experiments>3</experiments>
</comment>
<comment type="interaction">
    <interactant intactId="EBI-10232538">
        <id>Q8WWB5</id>
    </interactant>
    <interactant intactId="EBI-740727">
        <id>Q8TAU3</id>
        <label>ZNF417</label>
    </interactant>
    <organismsDiffer>false</organismsDiffer>
    <experiments>3</experiments>
</comment>
<comment type="interaction">
    <interactant intactId="EBI-10232538">
        <id>Q8WWB5</id>
    </interactant>
    <interactant intactId="EBI-11962468">
        <id>Q7Z4V0</id>
        <label>ZNF438</label>
    </interactant>
    <organismsDiffer>false</organismsDiffer>
    <experiments>3</experiments>
</comment>
<comment type="interaction">
    <interactant intactId="EBI-10232538">
        <id>Q8WWB5</id>
    </interactant>
    <interactant intactId="EBI-4395732">
        <id>P0C7X2</id>
        <label>ZNF688</label>
    </interactant>
    <organismsDiffer>false</organismsDiffer>
    <experiments>3</experiments>
</comment>
<comment type="alternative products">
    <event type="alternative splicing"/>
    <isoform>
        <id>Q8WWB5-1</id>
        <name>1</name>
        <sequence type="displayed"/>
    </isoform>
    <isoform>
        <id>Q8WWB5-2</id>
        <name>2</name>
        <sequence type="described" ref="VSP_054022 VSP_054025"/>
    </isoform>
    <isoform>
        <id>Q8WWB5-3</id>
        <name>3</name>
        <sequence type="described" ref="VSP_054023 VSP_054024"/>
    </isoform>
</comment>
<comment type="miscellaneous">
    <molecule>Isoform 3</molecule>
    <text evidence="3">May be due to a competing donor splice site.</text>
</comment>
<comment type="similarity">
    <text evidence="3">Belongs to the PIH1 family.</text>
</comment>
<evidence type="ECO:0000303" key="1">
    <source>
    </source>
</evidence>
<evidence type="ECO:0000303" key="2">
    <source>
    </source>
</evidence>
<evidence type="ECO:0000305" key="3"/>
<name>PIHD2_HUMAN</name>
<dbReference type="EMBL" id="AK300496">
    <property type="protein sequence ID" value="BAG62210.1"/>
    <property type="molecule type" value="mRNA"/>
</dbReference>
<dbReference type="EMBL" id="AP000907">
    <property type="status" value="NOT_ANNOTATED_CDS"/>
    <property type="molecule type" value="Genomic_DNA"/>
</dbReference>
<dbReference type="EMBL" id="CH471065">
    <property type="protein sequence ID" value="EAW67177.1"/>
    <property type="molecule type" value="Genomic_DNA"/>
</dbReference>
<dbReference type="EMBL" id="BC019238">
    <property type="protein sequence ID" value="AAH19238.1"/>
    <property type="molecule type" value="mRNA"/>
</dbReference>
<dbReference type="EMBL" id="BP369833">
    <property type="status" value="NOT_ANNOTATED_CDS"/>
    <property type="molecule type" value="mRNA"/>
</dbReference>
<dbReference type="CCDS" id="CCDS44730.1">
    <molecule id="Q8WWB5-2"/>
</dbReference>
<dbReference type="CCDS" id="CCDS8355.1">
    <molecule id="Q8WWB5-1"/>
</dbReference>
<dbReference type="RefSeq" id="NP_001076088.1">
    <molecule id="Q8WWB5-2"/>
    <property type="nucleotide sequence ID" value="NM_001082619.2"/>
</dbReference>
<dbReference type="RefSeq" id="NP_620144.1">
    <molecule id="Q8WWB5-1"/>
    <property type="nucleotide sequence ID" value="NM_138789.4"/>
</dbReference>
<dbReference type="RefSeq" id="XP_024304117.1">
    <molecule id="Q8WWB5-1"/>
    <property type="nucleotide sequence ID" value="XM_024448349.2"/>
</dbReference>
<dbReference type="RefSeq" id="XP_024304118.1">
    <molecule id="Q8WWB5-2"/>
    <property type="nucleotide sequence ID" value="XM_024448350.2"/>
</dbReference>
<dbReference type="RefSeq" id="XP_047282325.1">
    <molecule id="Q8WWB5-3"/>
    <property type="nucleotide sequence ID" value="XM_047426369.1"/>
</dbReference>
<dbReference type="RefSeq" id="XP_054223640.1">
    <molecule id="Q8WWB5-1"/>
    <property type="nucleotide sequence ID" value="XM_054367665.1"/>
</dbReference>
<dbReference type="RefSeq" id="XP_054223643.1">
    <molecule id="Q8WWB5-2"/>
    <property type="nucleotide sequence ID" value="XM_054367668.1"/>
</dbReference>
<dbReference type="RefSeq" id="XP_054223647.1">
    <molecule id="Q8WWB5-3"/>
    <property type="nucleotide sequence ID" value="XM_054367672.1"/>
</dbReference>
<dbReference type="SASBDB" id="Q8WWB5"/>
<dbReference type="SMR" id="Q8WWB5"/>
<dbReference type="BioGRID" id="125683">
    <property type="interactions" value="72"/>
</dbReference>
<dbReference type="ComplexPortal" id="CPX-6150">
    <property type="entry name" value="R2SP co-chaperone complex"/>
</dbReference>
<dbReference type="FunCoup" id="Q8WWB5">
    <property type="interactions" value="53"/>
</dbReference>
<dbReference type="IntAct" id="Q8WWB5">
    <property type="interactions" value="72"/>
</dbReference>
<dbReference type="STRING" id="9606.ENSP00000280350"/>
<dbReference type="PhosphoSitePlus" id="Q8WWB5"/>
<dbReference type="BioMuta" id="PIH1D2"/>
<dbReference type="DMDM" id="74730959"/>
<dbReference type="MassIVE" id="Q8WWB5"/>
<dbReference type="PaxDb" id="9606-ENSP00000280350"/>
<dbReference type="PeptideAtlas" id="Q8WWB5"/>
<dbReference type="ProteomicsDB" id="19604"/>
<dbReference type="ProteomicsDB" id="5149"/>
<dbReference type="ProteomicsDB" id="74873">
    <molecule id="Q8WWB5-1"/>
</dbReference>
<dbReference type="Antibodypedia" id="51744">
    <property type="antibodies" value="165 antibodies from 15 providers"/>
</dbReference>
<dbReference type="DNASU" id="120379"/>
<dbReference type="Ensembl" id="ENST00000280350.10">
    <molecule id="Q8WWB5-1"/>
    <property type="protein sequence ID" value="ENSP00000280350.4"/>
    <property type="gene ID" value="ENSG00000150773.12"/>
</dbReference>
<dbReference type="Ensembl" id="ENST00000431456.6">
    <molecule id="Q8WWB5-2"/>
    <property type="protein sequence ID" value="ENSP00000388209.1"/>
    <property type="gene ID" value="ENSG00000150773.12"/>
</dbReference>
<dbReference type="Ensembl" id="ENST00000528775.6">
    <molecule id="Q8WWB5-2"/>
    <property type="protein sequence ID" value="ENSP00000434275.1"/>
    <property type="gene ID" value="ENSG00000150773.12"/>
</dbReference>
<dbReference type="Ensembl" id="ENST00000530641.5">
    <molecule id="Q8WWB5-3"/>
    <property type="protein sequence ID" value="ENSP00000431147.1"/>
    <property type="gene ID" value="ENSG00000150773.12"/>
</dbReference>
<dbReference type="Ensembl" id="ENST00000532211.5">
    <molecule id="Q8WWB5-1"/>
    <property type="protein sequence ID" value="ENSP00000431841.1"/>
    <property type="gene ID" value="ENSG00000150773.12"/>
</dbReference>
<dbReference type="Ensembl" id="ENST00000676994.1">
    <molecule id="Q8WWB5-1"/>
    <property type="protein sequence ID" value="ENSP00000503801.1"/>
    <property type="gene ID" value="ENSG00000150773.12"/>
</dbReference>
<dbReference type="GeneID" id="120379"/>
<dbReference type="KEGG" id="hsa:120379"/>
<dbReference type="MANE-Select" id="ENST00000280350.10">
    <property type="protein sequence ID" value="ENSP00000280350.4"/>
    <property type="RefSeq nucleotide sequence ID" value="NM_138789.4"/>
    <property type="RefSeq protein sequence ID" value="NP_620144.1"/>
</dbReference>
<dbReference type="UCSC" id="uc001pmp.5">
    <molecule id="Q8WWB5-1"/>
    <property type="organism name" value="human"/>
</dbReference>
<dbReference type="AGR" id="HGNC:25210"/>
<dbReference type="CTD" id="120379"/>
<dbReference type="DisGeNET" id="120379"/>
<dbReference type="GeneCards" id="PIH1D2"/>
<dbReference type="HGNC" id="HGNC:25210">
    <property type="gene designation" value="PIH1D2"/>
</dbReference>
<dbReference type="HPA" id="ENSG00000150773">
    <property type="expression patterns" value="Tissue enriched (testis)"/>
</dbReference>
<dbReference type="neXtProt" id="NX_Q8WWB5"/>
<dbReference type="OpenTargets" id="ENSG00000150773"/>
<dbReference type="PharmGKB" id="PA162399536"/>
<dbReference type="VEuPathDB" id="HostDB:ENSG00000150773"/>
<dbReference type="eggNOG" id="KOG4356">
    <property type="taxonomic scope" value="Eukaryota"/>
</dbReference>
<dbReference type="GeneTree" id="ENSGT00510000048581"/>
<dbReference type="HOGENOM" id="CLU_075974_0_0_1"/>
<dbReference type="InParanoid" id="Q8WWB5"/>
<dbReference type="OMA" id="SCLCTEI"/>
<dbReference type="OrthoDB" id="545063at2759"/>
<dbReference type="PAN-GO" id="Q8WWB5">
    <property type="GO annotations" value="5 GO annotations based on evolutionary models"/>
</dbReference>
<dbReference type="PhylomeDB" id="Q8WWB5"/>
<dbReference type="TreeFam" id="TF324376"/>
<dbReference type="PathwayCommons" id="Q8WWB5"/>
<dbReference type="SignaLink" id="Q8WWB5"/>
<dbReference type="SIGNOR" id="Q8WWB5"/>
<dbReference type="BioGRID-ORCS" id="120379">
    <property type="hits" value="17 hits in 1145 CRISPR screens"/>
</dbReference>
<dbReference type="ChiTaRS" id="PIH1D2">
    <property type="organism name" value="human"/>
</dbReference>
<dbReference type="GenomeRNAi" id="120379"/>
<dbReference type="Pharos" id="Q8WWB5">
    <property type="development level" value="Tdark"/>
</dbReference>
<dbReference type="PRO" id="PR:Q8WWB5"/>
<dbReference type="Proteomes" id="UP000005640">
    <property type="component" value="Chromosome 11"/>
</dbReference>
<dbReference type="RNAct" id="Q8WWB5">
    <property type="molecule type" value="protein"/>
</dbReference>
<dbReference type="Bgee" id="ENSG00000150773">
    <property type="expression patterns" value="Expressed in left testis and 108 other cell types or tissues"/>
</dbReference>
<dbReference type="ExpressionAtlas" id="Q8WWB5">
    <property type="expression patterns" value="baseline and differential"/>
</dbReference>
<dbReference type="GO" id="GO:0005737">
    <property type="term" value="C:cytoplasm"/>
    <property type="evidence" value="ECO:0000318"/>
    <property type="project" value="GO_Central"/>
</dbReference>
<dbReference type="GO" id="GO:0101031">
    <property type="term" value="C:protein folding chaperone complex"/>
    <property type="evidence" value="ECO:0000353"/>
    <property type="project" value="ComplexPortal"/>
</dbReference>
<dbReference type="GO" id="GO:0097255">
    <property type="term" value="C:R2TP complex"/>
    <property type="evidence" value="ECO:0000318"/>
    <property type="project" value="GO_Central"/>
</dbReference>
<dbReference type="GO" id="GO:1990904">
    <property type="term" value="C:ribonucleoprotein complex"/>
    <property type="evidence" value="ECO:0000318"/>
    <property type="project" value="GO_Central"/>
</dbReference>
<dbReference type="GO" id="GO:0031267">
    <property type="term" value="F:small GTPase binding"/>
    <property type="evidence" value="ECO:0000353"/>
    <property type="project" value="UniProtKB"/>
</dbReference>
<dbReference type="GO" id="GO:0000492">
    <property type="term" value="P:box C/D snoRNP assembly"/>
    <property type="evidence" value="ECO:0000318"/>
    <property type="project" value="GO_Central"/>
</dbReference>
<dbReference type="GO" id="GO:0050821">
    <property type="term" value="P:protein stabilization"/>
    <property type="evidence" value="ECO:0000303"/>
    <property type="project" value="ComplexPortal"/>
</dbReference>
<dbReference type="GO" id="GO:0006364">
    <property type="term" value="P:rRNA processing"/>
    <property type="evidence" value="ECO:0000318"/>
    <property type="project" value="GO_Central"/>
</dbReference>
<dbReference type="CDD" id="cd00298">
    <property type="entry name" value="ACD_sHsps_p23-like"/>
    <property type="match status" value="1"/>
</dbReference>
<dbReference type="InterPro" id="IPR050734">
    <property type="entry name" value="PIH1/Kintoun_subfamily"/>
</dbReference>
<dbReference type="InterPro" id="IPR012981">
    <property type="entry name" value="PIH1_N"/>
</dbReference>
<dbReference type="InterPro" id="IPR041442">
    <property type="entry name" value="PIH1D1/2/3_CS-like"/>
</dbReference>
<dbReference type="PANTHER" id="PTHR22997">
    <property type="entry name" value="PIH1 DOMAIN-CONTAINING PROTEIN 1"/>
    <property type="match status" value="1"/>
</dbReference>
<dbReference type="PANTHER" id="PTHR22997:SF6">
    <property type="entry name" value="PIH1 DOMAIN-CONTAINING PROTEIN 2"/>
    <property type="match status" value="1"/>
</dbReference>
<dbReference type="Pfam" id="PF08190">
    <property type="entry name" value="PIH1"/>
    <property type="match status" value="1"/>
</dbReference>
<dbReference type="Pfam" id="PF18201">
    <property type="entry name" value="PIH1_CS"/>
    <property type="match status" value="1"/>
</dbReference>
<accession>Q8WWB5</accession>
<accession>B4DU48</accession>
<accession>E9PD82</accession>
<feature type="chain" id="PRO_0000307334" description="PIH1 domain-containing protein 2">
    <location>
        <begin position="1"/>
        <end position="315"/>
    </location>
</feature>
<feature type="splice variant" id="VSP_054022" description="In isoform 2." evidence="2">
    <original>DDLLIEVSEKYRLHLNL</original>
    <variation>GTTEPQALAKDELSLKF</variation>
    <location>
        <begin position="272"/>
        <end position="288"/>
    </location>
</feature>
<feature type="splice variant" id="VSP_054023" description="In isoform 3." evidence="1">
    <original>DD</original>
    <variation>VS</variation>
    <location>
        <begin position="272"/>
        <end position="273"/>
    </location>
</feature>
<feature type="splice variant" id="VSP_054024" description="In isoform 3." evidence="1">
    <location>
        <begin position="274"/>
        <end position="315"/>
    </location>
</feature>
<feature type="splice variant" id="VSP_054025" description="In isoform 2." evidence="2">
    <location>
        <begin position="289"/>
        <end position="315"/>
    </location>
</feature>
<feature type="sequence variant" id="VAR_035415" description="In dbSNP:rs1425917.">
    <original>A</original>
    <variation>V</variation>
    <location>
        <position position="117"/>
    </location>
</feature>
<reference key="1">
    <citation type="journal article" date="2004" name="Nat. Genet.">
        <title>Complete sequencing and characterization of 21,243 full-length human cDNAs.</title>
        <authorList>
            <person name="Ota T."/>
            <person name="Suzuki Y."/>
            <person name="Nishikawa T."/>
            <person name="Otsuki T."/>
            <person name="Sugiyama T."/>
            <person name="Irie R."/>
            <person name="Wakamatsu A."/>
            <person name="Hayashi K."/>
            <person name="Sato H."/>
            <person name="Nagai K."/>
            <person name="Kimura K."/>
            <person name="Makita H."/>
            <person name="Sekine M."/>
            <person name="Obayashi M."/>
            <person name="Nishi T."/>
            <person name="Shibahara T."/>
            <person name="Tanaka T."/>
            <person name="Ishii S."/>
            <person name="Yamamoto J."/>
            <person name="Saito K."/>
            <person name="Kawai Y."/>
            <person name="Isono Y."/>
            <person name="Nakamura Y."/>
            <person name="Nagahari K."/>
            <person name="Murakami K."/>
            <person name="Yasuda T."/>
            <person name="Iwayanagi T."/>
            <person name="Wagatsuma M."/>
            <person name="Shiratori A."/>
            <person name="Sudo H."/>
            <person name="Hosoiri T."/>
            <person name="Kaku Y."/>
            <person name="Kodaira H."/>
            <person name="Kondo H."/>
            <person name="Sugawara M."/>
            <person name="Takahashi M."/>
            <person name="Kanda K."/>
            <person name="Yokoi T."/>
            <person name="Furuya T."/>
            <person name="Kikkawa E."/>
            <person name="Omura Y."/>
            <person name="Abe K."/>
            <person name="Kamihara K."/>
            <person name="Katsuta N."/>
            <person name="Sato K."/>
            <person name="Tanikawa M."/>
            <person name="Yamazaki M."/>
            <person name="Ninomiya K."/>
            <person name="Ishibashi T."/>
            <person name="Yamashita H."/>
            <person name="Murakawa K."/>
            <person name="Fujimori K."/>
            <person name="Tanai H."/>
            <person name="Kimata M."/>
            <person name="Watanabe M."/>
            <person name="Hiraoka S."/>
            <person name="Chiba Y."/>
            <person name="Ishida S."/>
            <person name="Ono Y."/>
            <person name="Takiguchi S."/>
            <person name="Watanabe S."/>
            <person name="Yosida M."/>
            <person name="Hotuta T."/>
            <person name="Kusano J."/>
            <person name="Kanehori K."/>
            <person name="Takahashi-Fujii A."/>
            <person name="Hara H."/>
            <person name="Tanase T.-O."/>
            <person name="Nomura Y."/>
            <person name="Togiya S."/>
            <person name="Komai F."/>
            <person name="Hara R."/>
            <person name="Takeuchi K."/>
            <person name="Arita M."/>
            <person name="Imose N."/>
            <person name="Musashino K."/>
            <person name="Yuuki H."/>
            <person name="Oshima A."/>
            <person name="Sasaki N."/>
            <person name="Aotsuka S."/>
            <person name="Yoshikawa Y."/>
            <person name="Matsunawa H."/>
            <person name="Ichihara T."/>
            <person name="Shiohata N."/>
            <person name="Sano S."/>
            <person name="Moriya S."/>
            <person name="Momiyama H."/>
            <person name="Satoh N."/>
            <person name="Takami S."/>
            <person name="Terashima Y."/>
            <person name="Suzuki O."/>
            <person name="Nakagawa S."/>
            <person name="Senoh A."/>
            <person name="Mizoguchi H."/>
            <person name="Goto Y."/>
            <person name="Shimizu F."/>
            <person name="Wakebe H."/>
            <person name="Hishigaki H."/>
            <person name="Watanabe T."/>
            <person name="Sugiyama A."/>
            <person name="Takemoto M."/>
            <person name="Kawakami B."/>
            <person name="Yamazaki M."/>
            <person name="Watanabe K."/>
            <person name="Kumagai A."/>
            <person name="Itakura S."/>
            <person name="Fukuzumi Y."/>
            <person name="Fujimori Y."/>
            <person name="Komiyama M."/>
            <person name="Tashiro H."/>
            <person name="Tanigami A."/>
            <person name="Fujiwara T."/>
            <person name="Ono T."/>
            <person name="Yamada K."/>
            <person name="Fujii Y."/>
            <person name="Ozaki K."/>
            <person name="Hirao M."/>
            <person name="Ohmori Y."/>
            <person name="Kawabata A."/>
            <person name="Hikiji T."/>
            <person name="Kobatake N."/>
            <person name="Inagaki H."/>
            <person name="Ikema Y."/>
            <person name="Okamoto S."/>
            <person name="Okitani R."/>
            <person name="Kawakami T."/>
            <person name="Noguchi S."/>
            <person name="Itoh T."/>
            <person name="Shigeta K."/>
            <person name="Senba T."/>
            <person name="Matsumura K."/>
            <person name="Nakajima Y."/>
            <person name="Mizuno T."/>
            <person name="Morinaga M."/>
            <person name="Sasaki M."/>
            <person name="Togashi T."/>
            <person name="Oyama M."/>
            <person name="Hata H."/>
            <person name="Watanabe M."/>
            <person name="Komatsu T."/>
            <person name="Mizushima-Sugano J."/>
            <person name="Satoh T."/>
            <person name="Shirai Y."/>
            <person name="Takahashi Y."/>
            <person name="Nakagawa K."/>
            <person name="Okumura K."/>
            <person name="Nagase T."/>
            <person name="Nomura N."/>
            <person name="Kikuchi H."/>
            <person name="Masuho Y."/>
            <person name="Yamashita R."/>
            <person name="Nakai K."/>
            <person name="Yada T."/>
            <person name="Nakamura Y."/>
            <person name="Ohara O."/>
            <person name="Isogai T."/>
            <person name="Sugano S."/>
        </authorList>
    </citation>
    <scope>NUCLEOTIDE SEQUENCE [LARGE SCALE MRNA] (ISOFORM 3)</scope>
    <source>
        <tissue>Prostate</tissue>
    </source>
</reference>
<reference key="2">
    <citation type="journal article" date="2006" name="Nature">
        <title>Human chromosome 11 DNA sequence and analysis including novel gene identification.</title>
        <authorList>
            <person name="Taylor T.D."/>
            <person name="Noguchi H."/>
            <person name="Totoki Y."/>
            <person name="Toyoda A."/>
            <person name="Kuroki Y."/>
            <person name="Dewar K."/>
            <person name="Lloyd C."/>
            <person name="Itoh T."/>
            <person name="Takeda T."/>
            <person name="Kim D.-W."/>
            <person name="She X."/>
            <person name="Barlow K.F."/>
            <person name="Bloom T."/>
            <person name="Bruford E."/>
            <person name="Chang J.L."/>
            <person name="Cuomo C.A."/>
            <person name="Eichler E."/>
            <person name="FitzGerald M.G."/>
            <person name="Jaffe D.B."/>
            <person name="LaButti K."/>
            <person name="Nicol R."/>
            <person name="Park H.-S."/>
            <person name="Seaman C."/>
            <person name="Sougnez C."/>
            <person name="Yang X."/>
            <person name="Zimmer A.R."/>
            <person name="Zody M.C."/>
            <person name="Birren B.W."/>
            <person name="Nusbaum C."/>
            <person name="Fujiyama A."/>
            <person name="Hattori M."/>
            <person name="Rogers J."/>
            <person name="Lander E.S."/>
            <person name="Sakaki Y."/>
        </authorList>
    </citation>
    <scope>NUCLEOTIDE SEQUENCE [LARGE SCALE GENOMIC DNA]</scope>
</reference>
<reference key="3">
    <citation type="submission" date="2005-07" db="EMBL/GenBank/DDBJ databases">
        <authorList>
            <person name="Mural R.J."/>
            <person name="Istrail S."/>
            <person name="Sutton G.G."/>
            <person name="Florea L."/>
            <person name="Halpern A.L."/>
            <person name="Mobarry C.M."/>
            <person name="Lippert R."/>
            <person name="Walenz B."/>
            <person name="Shatkay H."/>
            <person name="Dew I."/>
            <person name="Miller J.R."/>
            <person name="Flanigan M.J."/>
            <person name="Edwards N.J."/>
            <person name="Bolanos R."/>
            <person name="Fasulo D."/>
            <person name="Halldorsson B.V."/>
            <person name="Hannenhalli S."/>
            <person name="Turner R."/>
            <person name="Yooseph S."/>
            <person name="Lu F."/>
            <person name="Nusskern D.R."/>
            <person name="Shue B.C."/>
            <person name="Zheng X.H."/>
            <person name="Zhong F."/>
            <person name="Delcher A.L."/>
            <person name="Huson D.H."/>
            <person name="Kravitz S.A."/>
            <person name="Mouchard L."/>
            <person name="Reinert K."/>
            <person name="Remington K.A."/>
            <person name="Clark A.G."/>
            <person name="Waterman M.S."/>
            <person name="Eichler E.E."/>
            <person name="Adams M.D."/>
            <person name="Hunkapiller M.W."/>
            <person name="Myers E.W."/>
            <person name="Venter J.C."/>
        </authorList>
    </citation>
    <scope>NUCLEOTIDE SEQUENCE [LARGE SCALE GENOMIC DNA]</scope>
</reference>
<reference key="4">
    <citation type="journal article" date="2004" name="Genome Res.">
        <title>The status, quality, and expansion of the NIH full-length cDNA project: the Mammalian Gene Collection (MGC).</title>
        <authorList>
            <consortium name="The MGC Project Team"/>
        </authorList>
    </citation>
    <scope>NUCLEOTIDE SEQUENCE [LARGE SCALE MRNA] (ISOFORM 1)</scope>
    <source>
        <tissue>Testis</tissue>
    </source>
</reference>
<reference key="5">
    <citation type="journal article" date="2006" name="Genome Res.">
        <title>Diversification of transcriptional modulation: large-scale identification and characterization of putative alternative promoters of human genes.</title>
        <authorList>
            <person name="Kimura K."/>
            <person name="Wakamatsu A."/>
            <person name="Suzuki Y."/>
            <person name="Ota T."/>
            <person name="Nishikawa T."/>
            <person name="Yamashita R."/>
            <person name="Yamamoto J."/>
            <person name="Sekine M."/>
            <person name="Tsuritani K."/>
            <person name="Wakaguri H."/>
            <person name="Ishii S."/>
            <person name="Sugiyama T."/>
            <person name="Saito K."/>
            <person name="Isono Y."/>
            <person name="Irie R."/>
            <person name="Kushida N."/>
            <person name="Yoneyama T."/>
            <person name="Otsuka R."/>
            <person name="Kanda K."/>
            <person name="Yokoi T."/>
            <person name="Kondo H."/>
            <person name="Wagatsuma M."/>
            <person name="Murakawa K."/>
            <person name="Ishida S."/>
            <person name="Ishibashi T."/>
            <person name="Takahashi-Fujii A."/>
            <person name="Tanase T."/>
            <person name="Nagai K."/>
            <person name="Kikuchi H."/>
            <person name="Nakai K."/>
            <person name="Isogai T."/>
            <person name="Sugano S."/>
        </authorList>
    </citation>
    <scope>NUCLEOTIDE SEQUENCE [LARGE SCALE MRNA] OF 131-315 (ISOFORM 2)</scope>
    <source>
        <tissue>Testis</tissue>
    </source>
</reference>
<proteinExistence type="evidence at protein level"/>
<organism>
    <name type="scientific">Homo sapiens</name>
    <name type="common">Human</name>
    <dbReference type="NCBI Taxonomy" id="9606"/>
    <lineage>
        <taxon>Eukaryota</taxon>
        <taxon>Metazoa</taxon>
        <taxon>Chordata</taxon>
        <taxon>Craniata</taxon>
        <taxon>Vertebrata</taxon>
        <taxon>Euteleostomi</taxon>
        <taxon>Mammalia</taxon>
        <taxon>Eutheria</taxon>
        <taxon>Euarchontoglires</taxon>
        <taxon>Primates</taxon>
        <taxon>Haplorrhini</taxon>
        <taxon>Catarrhini</taxon>
        <taxon>Hominidae</taxon>
        <taxon>Homo</taxon>
    </lineage>
</organism>
<gene>
    <name type="primary">PIH1D2</name>
</gene>